<protein>
    <recommendedName>
        <fullName evidence="1">Probable septum site-determining protein MinC</fullName>
    </recommendedName>
</protein>
<keyword id="KW-0131">Cell cycle</keyword>
<keyword id="KW-0132">Cell division</keyword>
<keyword id="KW-0717">Septation</keyword>
<name>MINC_BURCJ</name>
<dbReference type="EMBL" id="AM747720">
    <property type="protein sequence ID" value="CAR53349.1"/>
    <property type="molecule type" value="Genomic_DNA"/>
</dbReference>
<dbReference type="RefSeq" id="WP_006486623.1">
    <property type="nucleotide sequence ID" value="NC_011000.1"/>
</dbReference>
<dbReference type="SMR" id="B4EBR1"/>
<dbReference type="KEGG" id="bcj:BCAL3027"/>
<dbReference type="eggNOG" id="COG0850">
    <property type="taxonomic scope" value="Bacteria"/>
</dbReference>
<dbReference type="HOGENOM" id="CLU_067812_0_1_4"/>
<dbReference type="BioCyc" id="BCEN216591:G1G1V-3353-MONOMER"/>
<dbReference type="Proteomes" id="UP000001035">
    <property type="component" value="Chromosome 1"/>
</dbReference>
<dbReference type="GO" id="GO:0000902">
    <property type="term" value="P:cell morphogenesis"/>
    <property type="evidence" value="ECO:0007669"/>
    <property type="project" value="InterPro"/>
</dbReference>
<dbReference type="GO" id="GO:0000917">
    <property type="term" value="P:division septum assembly"/>
    <property type="evidence" value="ECO:0007669"/>
    <property type="project" value="UniProtKB-KW"/>
</dbReference>
<dbReference type="GO" id="GO:0051302">
    <property type="term" value="P:regulation of cell division"/>
    <property type="evidence" value="ECO:0007669"/>
    <property type="project" value="InterPro"/>
</dbReference>
<dbReference type="GO" id="GO:1901891">
    <property type="term" value="P:regulation of cell septum assembly"/>
    <property type="evidence" value="ECO:0007669"/>
    <property type="project" value="InterPro"/>
</dbReference>
<dbReference type="Gene3D" id="2.160.20.70">
    <property type="match status" value="1"/>
</dbReference>
<dbReference type="Gene3D" id="3.30.70.260">
    <property type="match status" value="1"/>
</dbReference>
<dbReference type="HAMAP" id="MF_00267">
    <property type="entry name" value="MinC"/>
    <property type="match status" value="1"/>
</dbReference>
<dbReference type="InterPro" id="IPR016098">
    <property type="entry name" value="CAP/MinC_C"/>
</dbReference>
<dbReference type="InterPro" id="IPR013033">
    <property type="entry name" value="MinC"/>
</dbReference>
<dbReference type="InterPro" id="IPR036145">
    <property type="entry name" value="MinC_C_sf"/>
</dbReference>
<dbReference type="InterPro" id="IPR007874">
    <property type="entry name" value="MinC_N"/>
</dbReference>
<dbReference type="InterPro" id="IPR005526">
    <property type="entry name" value="Septum_form_inhib_MinC_C"/>
</dbReference>
<dbReference type="NCBIfam" id="TIGR01222">
    <property type="entry name" value="minC"/>
    <property type="match status" value="1"/>
</dbReference>
<dbReference type="PANTHER" id="PTHR34108">
    <property type="entry name" value="SEPTUM SITE-DETERMINING PROTEIN MINC"/>
    <property type="match status" value="1"/>
</dbReference>
<dbReference type="PANTHER" id="PTHR34108:SF1">
    <property type="entry name" value="SEPTUM SITE-DETERMINING PROTEIN MINC"/>
    <property type="match status" value="1"/>
</dbReference>
<dbReference type="Pfam" id="PF03775">
    <property type="entry name" value="MinC_C"/>
    <property type="match status" value="1"/>
</dbReference>
<dbReference type="Pfam" id="PF05209">
    <property type="entry name" value="MinC_N"/>
    <property type="match status" value="1"/>
</dbReference>
<dbReference type="SUPFAM" id="SSF63848">
    <property type="entry name" value="Cell-division inhibitor MinC, C-terminal domain"/>
    <property type="match status" value="1"/>
</dbReference>
<sequence length="261" mass="27978">MSLKKSPFFELRSGSVDTLLFTVKTTDLDALRTELVKRFEATPEFFADDVVAIDVRRLADGERVALADIRQMLNDVRMRPVGVVALATQGWAGEAGLPLLEARDRRAPAAKPADEAEPAAVLAVEAAAAPAAAAAPEQSSDPVPTLLQAGGQTLVIDRPLRSGQQIYAKGDLVVLAPVSHGAEIIAEGNIHIYAPLRGRALAGVHGNHDARIFCTCLEPELISIAGIYRTTENPLPADVLGKSVQIRLEEEKLMIEPLRLT</sequence>
<comment type="function">
    <text evidence="1">Cell division inhibitor that blocks the formation of polar Z ring septums. Rapidly oscillates between the poles of the cell to destabilize FtsZ filaments that have formed before they mature into polar Z rings. Prevents FtsZ polymerization.</text>
</comment>
<comment type="subunit">
    <text evidence="1">Interacts with MinD and FtsZ.</text>
</comment>
<comment type="similarity">
    <text evidence="1">Belongs to the MinC family.</text>
</comment>
<gene>
    <name evidence="1" type="primary">minC</name>
    <name type="ordered locus">BceJ2315_29730</name>
    <name type="ORF">BCAL3027</name>
</gene>
<accession>B4EBR1</accession>
<feature type="chain" id="PRO_1000114271" description="Probable septum site-determining protein MinC">
    <location>
        <begin position="1"/>
        <end position="261"/>
    </location>
</feature>
<organism>
    <name type="scientific">Burkholderia cenocepacia (strain ATCC BAA-245 / DSM 16553 / LMG 16656 / NCTC 13227 / J2315 / CF5610)</name>
    <name type="common">Burkholderia cepacia (strain J2315)</name>
    <dbReference type="NCBI Taxonomy" id="216591"/>
    <lineage>
        <taxon>Bacteria</taxon>
        <taxon>Pseudomonadati</taxon>
        <taxon>Pseudomonadota</taxon>
        <taxon>Betaproteobacteria</taxon>
        <taxon>Burkholderiales</taxon>
        <taxon>Burkholderiaceae</taxon>
        <taxon>Burkholderia</taxon>
        <taxon>Burkholderia cepacia complex</taxon>
    </lineage>
</organism>
<proteinExistence type="inferred from homology"/>
<reference key="1">
    <citation type="journal article" date="2009" name="J. Bacteriol.">
        <title>The genome of Burkholderia cenocepacia J2315, an epidemic pathogen of cystic fibrosis patients.</title>
        <authorList>
            <person name="Holden M.T."/>
            <person name="Seth-Smith H.M."/>
            <person name="Crossman L.C."/>
            <person name="Sebaihia M."/>
            <person name="Bentley S.D."/>
            <person name="Cerdeno-Tarraga A.M."/>
            <person name="Thomson N.R."/>
            <person name="Bason N."/>
            <person name="Quail M.A."/>
            <person name="Sharp S."/>
            <person name="Cherevach I."/>
            <person name="Churcher C."/>
            <person name="Goodhead I."/>
            <person name="Hauser H."/>
            <person name="Holroyd N."/>
            <person name="Mungall K."/>
            <person name="Scott P."/>
            <person name="Walker D."/>
            <person name="White B."/>
            <person name="Rose H."/>
            <person name="Iversen P."/>
            <person name="Mil-Homens D."/>
            <person name="Rocha E.P."/>
            <person name="Fialho A.M."/>
            <person name="Baldwin A."/>
            <person name="Dowson C."/>
            <person name="Barrell B.G."/>
            <person name="Govan J.R."/>
            <person name="Vandamme P."/>
            <person name="Hart C.A."/>
            <person name="Mahenthiralingam E."/>
            <person name="Parkhill J."/>
        </authorList>
    </citation>
    <scope>NUCLEOTIDE SEQUENCE [LARGE SCALE GENOMIC DNA]</scope>
    <source>
        <strain>ATCC BAA-245 / DSM 16553 / LMG 16656 / NCTC 13227 / J2315 / CF5610</strain>
    </source>
</reference>
<evidence type="ECO:0000255" key="1">
    <source>
        <dbReference type="HAMAP-Rule" id="MF_00267"/>
    </source>
</evidence>